<protein>
    <recommendedName>
        <fullName>Osteocalcin</fullName>
    </recommendedName>
    <alternativeName>
        <fullName>Bone Gla protein</fullName>
        <shortName>BGP</shortName>
    </alternativeName>
    <alternativeName>
        <fullName>Gamma-carboxyglutamic acid-containing protein</fullName>
    </alternativeName>
</protein>
<sequence length="48" mass="5063">AGTAPADLTVAQLESLKEVCEANLACEHMMDVSGIIAAYTAYYGPIPY</sequence>
<reference key="1">
    <citation type="journal article" date="2003" name="J. Biol. Chem.">
        <title>Structure, activity, and distribution of fish osteocalcin.</title>
        <authorList>
            <person name="Nishimoto S.K."/>
            <person name="Waite J.H."/>
            <person name="Nishimoto M."/>
            <person name="Kriwacki R.W."/>
        </authorList>
    </citation>
    <scope>PROTEIN SEQUENCE</scope>
    <scope>FUNCTION</scope>
    <scope>DISULFIDE BOND</scope>
    <scope>GAMMA-CARBOXYGLUTAMATION AT GLU-14; GLU-18 AND GLU-21</scope>
    <source>
        <tissue>Bone</tissue>
    </source>
</reference>
<accession>Q7LZI4</accession>
<comment type="function">
    <text evidence="2 4">The carboxylated form is one of the main organic components of the bone matrix, which constitutes 1-2% of the total bone protein (PubMed:12517753). The carboxylated form binds strongly to apatite and calcium (By similarity).</text>
</comment>
<comment type="subcellular location">
    <subcellularLocation>
        <location evidence="4">Secreted</location>
    </subcellularLocation>
    <subcellularLocation>
        <location evidence="4">Secreted</location>
        <location evidence="4">Extracellular space</location>
        <location evidence="4">Extracellular matrix</location>
    </subcellularLocation>
</comment>
<comment type="PTM">
    <text evidence="3 4">Gamma-carboxyglutamate residues are formed by vitamin K dependent carboxylation by GGCX. These residues are essential for the binding of calcium.</text>
</comment>
<comment type="similarity">
    <text evidence="5">Belongs to the osteocalcin/matrix Gla protein family.</text>
</comment>
<keyword id="KW-0091">Biomineralization</keyword>
<keyword id="KW-0106">Calcium</keyword>
<keyword id="KW-0903">Direct protein sequencing</keyword>
<keyword id="KW-1015">Disulfide bond</keyword>
<keyword id="KW-0272">Extracellular matrix</keyword>
<keyword id="KW-0301">Gamma-carboxyglutamic acid</keyword>
<keyword id="KW-0372">Hormone</keyword>
<keyword id="KW-0479">Metal-binding</keyword>
<keyword id="KW-1185">Reference proteome</keyword>
<keyword id="KW-0964">Secreted</keyword>
<dbReference type="PIR" id="A59458">
    <property type="entry name" value="A59458"/>
</dbReference>
<dbReference type="SMR" id="Q7LZI4"/>
<dbReference type="Proteomes" id="UP000694384">
    <property type="component" value="Unplaced"/>
</dbReference>
<dbReference type="Proteomes" id="UP000694427">
    <property type="component" value="Unplaced"/>
</dbReference>
<dbReference type="Proteomes" id="UP000694700">
    <property type="component" value="Unplaced"/>
</dbReference>
<dbReference type="Proteomes" id="UP000694701">
    <property type="component" value="Unplaced"/>
</dbReference>
<dbReference type="Proteomes" id="UP001155660">
    <property type="component" value="Unplaced"/>
</dbReference>
<dbReference type="GO" id="GO:0005576">
    <property type="term" value="C:extracellular region"/>
    <property type="evidence" value="ECO:0007669"/>
    <property type="project" value="UniProtKB-SubCell"/>
</dbReference>
<dbReference type="GO" id="GO:0005509">
    <property type="term" value="F:calcium ion binding"/>
    <property type="evidence" value="ECO:0007669"/>
    <property type="project" value="InterPro"/>
</dbReference>
<dbReference type="GO" id="GO:0005179">
    <property type="term" value="F:hormone activity"/>
    <property type="evidence" value="ECO:0000250"/>
    <property type="project" value="UniProtKB"/>
</dbReference>
<dbReference type="GO" id="GO:0046848">
    <property type="term" value="F:hydroxyapatite binding"/>
    <property type="evidence" value="ECO:0007669"/>
    <property type="project" value="TreeGrafter"/>
</dbReference>
<dbReference type="GO" id="GO:0008147">
    <property type="term" value="F:structural constituent of bone"/>
    <property type="evidence" value="ECO:0000250"/>
    <property type="project" value="UniProtKB"/>
</dbReference>
<dbReference type="GO" id="GO:0031214">
    <property type="term" value="P:biomineral tissue development"/>
    <property type="evidence" value="ECO:0007669"/>
    <property type="project" value="UniProtKB-KW"/>
</dbReference>
<dbReference type="GO" id="GO:0060348">
    <property type="term" value="P:bone development"/>
    <property type="evidence" value="ECO:0007669"/>
    <property type="project" value="InterPro"/>
</dbReference>
<dbReference type="GO" id="GO:0032869">
    <property type="term" value="P:cellular response to insulin stimulus"/>
    <property type="evidence" value="ECO:0000250"/>
    <property type="project" value="UniProtKB"/>
</dbReference>
<dbReference type="GO" id="GO:0042593">
    <property type="term" value="P:glucose homeostasis"/>
    <property type="evidence" value="ECO:0000250"/>
    <property type="project" value="UniProtKB"/>
</dbReference>
<dbReference type="GO" id="GO:1903011">
    <property type="term" value="P:negative regulation of bone development"/>
    <property type="evidence" value="ECO:0000250"/>
    <property type="project" value="UniProtKB"/>
</dbReference>
<dbReference type="GO" id="GO:0001649">
    <property type="term" value="P:osteoblast differentiation"/>
    <property type="evidence" value="ECO:0007669"/>
    <property type="project" value="TreeGrafter"/>
</dbReference>
<dbReference type="GO" id="GO:1900076">
    <property type="term" value="P:regulation of cellular response to insulin stimulus"/>
    <property type="evidence" value="ECO:0007669"/>
    <property type="project" value="InterPro"/>
</dbReference>
<dbReference type="GO" id="GO:0032571">
    <property type="term" value="P:response to vitamin K"/>
    <property type="evidence" value="ECO:0007669"/>
    <property type="project" value="InterPro"/>
</dbReference>
<dbReference type="GO" id="GO:0044342">
    <property type="term" value="P:type B pancreatic cell proliferation"/>
    <property type="evidence" value="ECO:0000250"/>
    <property type="project" value="UniProtKB"/>
</dbReference>
<dbReference type="InterPro" id="IPR035972">
    <property type="entry name" value="GLA-like_dom_SF"/>
</dbReference>
<dbReference type="InterPro" id="IPR000294">
    <property type="entry name" value="GLA_domain"/>
</dbReference>
<dbReference type="InterPro" id="IPR039176">
    <property type="entry name" value="Osteocalcin"/>
</dbReference>
<dbReference type="PANTHER" id="PTHR14235">
    <property type="entry name" value="OSTEOCALCIN"/>
    <property type="match status" value="1"/>
</dbReference>
<dbReference type="PANTHER" id="PTHR14235:SF0">
    <property type="entry name" value="OSTEOCALCIN"/>
    <property type="match status" value="1"/>
</dbReference>
<dbReference type="SUPFAM" id="SSF57630">
    <property type="entry name" value="GLA-domain"/>
    <property type="match status" value="1"/>
</dbReference>
<dbReference type="PROSITE" id="PS00011">
    <property type="entry name" value="GLA_1"/>
    <property type="match status" value="1"/>
</dbReference>
<dbReference type="PROSITE" id="PS50998">
    <property type="entry name" value="GLA_2"/>
    <property type="match status" value="1"/>
</dbReference>
<feature type="chain" id="PRO_0000148908" description="Osteocalcin">
    <location>
        <begin position="1"/>
        <end position="48"/>
    </location>
</feature>
<feature type="domain" description="Gla" evidence="3">
    <location>
        <begin position="1"/>
        <end position="44"/>
    </location>
</feature>
<feature type="binding site" evidence="1">
    <location>
        <position position="14"/>
    </location>
    <ligand>
        <name>Ca(2+)</name>
        <dbReference type="ChEBI" id="CHEBI:29108"/>
        <label>1</label>
    </ligand>
</feature>
<feature type="binding site" evidence="1">
    <location>
        <position position="18"/>
    </location>
    <ligand>
        <name>Ca(2+)</name>
        <dbReference type="ChEBI" id="CHEBI:29108"/>
        <label>2</label>
    </ligand>
</feature>
<feature type="binding site" evidence="1">
    <location>
        <position position="21"/>
    </location>
    <ligand>
        <name>Ca(2+)</name>
        <dbReference type="ChEBI" id="CHEBI:29108"/>
        <label>2</label>
    </ligand>
</feature>
<feature type="binding site" evidence="1">
    <location>
        <position position="21"/>
    </location>
    <ligand>
        <name>Ca(2+)</name>
        <dbReference type="ChEBI" id="CHEBI:29108"/>
        <label>3</label>
    </ligand>
</feature>
<feature type="binding site" evidence="1">
    <location>
        <position position="27"/>
    </location>
    <ligand>
        <name>Ca(2+)</name>
        <dbReference type="ChEBI" id="CHEBI:29108"/>
        <label>3</label>
    </ligand>
</feature>
<feature type="modified residue" description="4-carboxyglutamate" evidence="3 4">
    <location>
        <position position="14"/>
    </location>
</feature>
<feature type="modified residue" description="4-carboxyglutamate" evidence="3 4">
    <location>
        <position position="18"/>
    </location>
</feature>
<feature type="modified residue" description="4-carboxyglutamate" evidence="3 4">
    <location>
        <position position="21"/>
    </location>
</feature>
<feature type="disulfide bond" evidence="3 4">
    <location>
        <begin position="20"/>
        <end position="26"/>
    </location>
</feature>
<gene>
    <name type="primary">bglap</name>
</gene>
<proteinExistence type="evidence at protein level"/>
<evidence type="ECO:0000250" key="1">
    <source>
        <dbReference type="UniProtKB" id="P02820"/>
    </source>
</evidence>
<evidence type="ECO:0000250" key="2">
    <source>
        <dbReference type="UniProtKB" id="P86546"/>
    </source>
</evidence>
<evidence type="ECO:0000255" key="3">
    <source>
        <dbReference type="PROSITE-ProRule" id="PRU00463"/>
    </source>
</evidence>
<evidence type="ECO:0000269" key="4">
    <source>
    </source>
</evidence>
<evidence type="ECO:0000305" key="5"/>
<name>OSTCN_CYPCA</name>
<organism>
    <name type="scientific">Cyprinus carpio</name>
    <name type="common">Common carp</name>
    <dbReference type="NCBI Taxonomy" id="7962"/>
    <lineage>
        <taxon>Eukaryota</taxon>
        <taxon>Metazoa</taxon>
        <taxon>Chordata</taxon>
        <taxon>Craniata</taxon>
        <taxon>Vertebrata</taxon>
        <taxon>Euteleostomi</taxon>
        <taxon>Actinopterygii</taxon>
        <taxon>Neopterygii</taxon>
        <taxon>Teleostei</taxon>
        <taxon>Ostariophysi</taxon>
        <taxon>Cypriniformes</taxon>
        <taxon>Cyprinidae</taxon>
        <taxon>Cyprininae</taxon>
        <taxon>Cyprinus</taxon>
    </lineage>
</organism>